<comment type="function">
    <text>Probably involved in copper export.</text>
</comment>
<comment type="catalytic activity">
    <reaction>
        <text>Cu(2+)(in) + ATP + H2O = Cu(2+)(out) + ADP + phosphate + H(+)</text>
        <dbReference type="Rhea" id="RHEA:10376"/>
        <dbReference type="ChEBI" id="CHEBI:15377"/>
        <dbReference type="ChEBI" id="CHEBI:15378"/>
        <dbReference type="ChEBI" id="CHEBI:29036"/>
        <dbReference type="ChEBI" id="CHEBI:30616"/>
        <dbReference type="ChEBI" id="CHEBI:43474"/>
        <dbReference type="ChEBI" id="CHEBI:456216"/>
        <dbReference type="EC" id="7.2.2.9"/>
    </reaction>
</comment>
<comment type="subcellular location">
    <subcellularLocation>
        <location>Cell membrane</location>
        <topology>Multi-pass membrane protein</topology>
    </subcellularLocation>
</comment>
<comment type="similarity">
    <text evidence="4">Belongs to the cation transport ATPase (P-type) (TC 3.A.3) family. Type IB subfamily.</text>
</comment>
<organism>
    <name type="scientific">Helicobacter pylori (strain ATCC 700392 / 26695)</name>
    <name type="common">Campylobacter pylori</name>
    <dbReference type="NCBI Taxonomy" id="85962"/>
    <lineage>
        <taxon>Bacteria</taxon>
        <taxon>Pseudomonadati</taxon>
        <taxon>Campylobacterota</taxon>
        <taxon>Epsilonproteobacteria</taxon>
        <taxon>Campylobacterales</taxon>
        <taxon>Helicobacteraceae</taxon>
        <taxon>Helicobacter</taxon>
    </lineage>
</organism>
<gene>
    <name type="primary">copA</name>
    <name type="ordered locus">HP_1072</name>
</gene>
<reference key="1">
    <citation type="journal article" date="1997" name="Nature">
        <title>The complete genome sequence of the gastric pathogen Helicobacter pylori.</title>
        <authorList>
            <person name="Tomb J.-F."/>
            <person name="White O."/>
            <person name="Kerlavage A.R."/>
            <person name="Clayton R.A."/>
            <person name="Sutton G.G."/>
            <person name="Fleischmann R.D."/>
            <person name="Ketchum K.A."/>
            <person name="Klenk H.-P."/>
            <person name="Gill S.R."/>
            <person name="Dougherty B.A."/>
            <person name="Nelson K.E."/>
            <person name="Quackenbush J."/>
            <person name="Zhou L."/>
            <person name="Kirkness E.F."/>
            <person name="Peterson S.N."/>
            <person name="Loftus B.J."/>
            <person name="Richardson D.L."/>
            <person name="Dodson R.J."/>
            <person name="Khalak H.G."/>
            <person name="Glodek A."/>
            <person name="McKenney K."/>
            <person name="FitzGerald L.M."/>
            <person name="Lee N."/>
            <person name="Adams M.D."/>
            <person name="Hickey E.K."/>
            <person name="Berg D.E."/>
            <person name="Gocayne J.D."/>
            <person name="Utterback T.R."/>
            <person name="Peterson J.D."/>
            <person name="Kelley J.M."/>
            <person name="Cotton M.D."/>
            <person name="Weidman J.F."/>
            <person name="Fujii C."/>
            <person name="Bowman C."/>
            <person name="Watthey L."/>
            <person name="Wallin E."/>
            <person name="Hayes W.S."/>
            <person name="Borodovsky M."/>
            <person name="Karp P.D."/>
            <person name="Smith H.O."/>
            <person name="Fraser C.M."/>
            <person name="Venter J.C."/>
        </authorList>
    </citation>
    <scope>NUCLEOTIDE SEQUENCE [LARGE SCALE GENOMIC DNA]</scope>
    <source>
        <strain>ATCC 700392 / 26695</strain>
    </source>
</reference>
<feature type="chain" id="PRO_0000046170" description="Copper-transporting ATPase">
    <location>
        <begin position="1"/>
        <end position="745"/>
    </location>
</feature>
<feature type="topological domain" description="Cytoplasmic" evidence="2">
    <location>
        <begin position="1"/>
        <end position="83"/>
    </location>
</feature>
<feature type="transmembrane region" description="Helical" evidence="2">
    <location>
        <begin position="84"/>
        <end position="104"/>
    </location>
</feature>
<feature type="topological domain" description="Extracellular" evidence="2">
    <location>
        <begin position="105"/>
        <end position="124"/>
    </location>
</feature>
<feature type="transmembrane region" description="Helical" evidence="2">
    <location>
        <begin position="125"/>
        <end position="144"/>
    </location>
</feature>
<feature type="topological domain" description="Cytoplasmic" evidence="2">
    <location>
        <begin position="145"/>
        <end position="151"/>
    </location>
</feature>
<feature type="transmembrane region" description="Helical" evidence="2">
    <location>
        <begin position="152"/>
        <end position="172"/>
    </location>
</feature>
<feature type="topological domain" description="Extracellular" evidence="2">
    <location>
        <begin position="173"/>
        <end position="194"/>
    </location>
</feature>
<feature type="transmembrane region" description="Helical" evidence="2">
    <location>
        <begin position="195"/>
        <end position="215"/>
    </location>
</feature>
<feature type="topological domain" description="Cytoplasmic" evidence="2">
    <location>
        <begin position="216"/>
        <end position="343"/>
    </location>
</feature>
<feature type="transmembrane region" description="Helical" evidence="2">
    <location>
        <begin position="344"/>
        <end position="366"/>
    </location>
</feature>
<feature type="topological domain" description="Extracellular" evidence="2">
    <location>
        <begin position="367"/>
        <end position="379"/>
    </location>
</feature>
<feature type="transmembrane region" description="Helical" evidence="2">
    <location>
        <begin position="380"/>
        <end position="397"/>
    </location>
</feature>
<feature type="topological domain" description="Cytoplasmic" evidence="2">
    <location>
        <begin position="398"/>
        <end position="685"/>
    </location>
</feature>
<feature type="transmembrane region" description="Helical" evidence="2">
    <location>
        <begin position="686"/>
        <end position="705"/>
    </location>
</feature>
<feature type="topological domain" description="Extracellular" evidence="2">
    <location>
        <begin position="706"/>
        <end position="716"/>
    </location>
</feature>
<feature type="transmembrane region" description="Helical" evidence="2">
    <location>
        <begin position="717"/>
        <end position="735"/>
    </location>
</feature>
<feature type="topological domain" description="Cytoplasmic" evidence="2">
    <location>
        <begin position="736"/>
        <end position="745"/>
    </location>
</feature>
<feature type="domain" description="HMA" evidence="3">
    <location>
        <begin position="1"/>
        <end position="67"/>
    </location>
</feature>
<feature type="active site" description="4-aspartylphosphate intermediate" evidence="1">
    <location>
        <position position="435"/>
    </location>
</feature>
<feature type="binding site" evidence="3">
    <location>
        <position position="12"/>
    </location>
    <ligand>
        <name>Cu cation</name>
        <dbReference type="ChEBI" id="CHEBI:23378"/>
    </ligand>
</feature>
<feature type="binding site" evidence="3">
    <location>
        <position position="15"/>
    </location>
    <ligand>
        <name>Cu cation</name>
        <dbReference type="ChEBI" id="CHEBI:23378"/>
    </ligand>
</feature>
<feature type="binding site">
    <location>
        <position position="631"/>
    </location>
    <ligand>
        <name>Mg(2+)</name>
        <dbReference type="ChEBI" id="CHEBI:18420"/>
    </ligand>
</feature>
<feature type="binding site">
    <location>
        <position position="635"/>
    </location>
    <ligand>
        <name>Mg(2+)</name>
        <dbReference type="ChEBI" id="CHEBI:18420"/>
    </ligand>
</feature>
<accession>P55989</accession>
<proteinExistence type="inferred from homology"/>
<protein>
    <recommendedName>
        <fullName>Copper-transporting ATPase</fullName>
        <ecNumber>7.2.2.9</ecNumber>
    </recommendedName>
</protein>
<sequence length="745" mass="81853">MKESFYIEGMTCTACSSGIERSLGRKSFVKKIEVSLLNKSANIEFDENQTNLDEIFKLIEKLGYSPKKALTKEKKEFFSPNVKLALAVIFTLFVVYLSMGAMLSPSLLPESLLAIDNHSNFLNACLQLIGALIVMHLGRDFYIQGFKALWHRQPNMSSLIAIGTSAALISSLWQLYLVYTNHYTDQWSYGHYYFESVCVILMFVMVGKRIENVSKDKALDAMQALMKNAPKTALKMQNNQQIEVLVDSIVVGDILKVLPGSAIAVDGEIIEGEGELDESMLSGEALPVYKKVGDKVFSGTFNSHTSFLMKATQNNKNSTLSQIIEMIYNAQSSKAEISRLADKVSSVFVPSVIAISILAFVVWLIIAPKPDFWWNFGIALEVFVSVLVISCPCALGLATPMSILVANQKASSLGLFFKDAKSLEKARLVNTIVFDKTGTLTNGKPVVKSVHSKIELLELLSLALSIEKSSEHVIAKGIVEYAKEHNAPLKEMSGVKVKTGFGISAKTDYQGTKEIIKVGNSEFFNPINTLEIKENGILVFVGRAISEKEDELLGAFVLEDLPKKGVKEHIAQIKNLGINTFLLSGDNRENVQKCAFELGIDGYISNAKPQDKLNKIKELKEKGQIVMMVGDGLNDAPSLAMSDVAVVMAKGSDVSVQAADIVSFNNDIKSVYSAIKLSQATIKNIKENLFWAFCYNSVFIPLACGVLYKANLMLSPAIAGLAMSLSSVSVVLNSQRLRNFKIKDH</sequence>
<name>COPA_HELPY</name>
<evidence type="ECO:0000250" key="1"/>
<evidence type="ECO:0000255" key="2"/>
<evidence type="ECO:0000255" key="3">
    <source>
        <dbReference type="PROSITE-ProRule" id="PRU00280"/>
    </source>
</evidence>
<evidence type="ECO:0000305" key="4"/>
<keyword id="KW-0067">ATP-binding</keyword>
<keyword id="KW-1003">Cell membrane</keyword>
<keyword id="KW-0186">Copper</keyword>
<keyword id="KW-0187">Copper transport</keyword>
<keyword id="KW-0406">Ion transport</keyword>
<keyword id="KW-0460">Magnesium</keyword>
<keyword id="KW-0472">Membrane</keyword>
<keyword id="KW-0479">Metal-binding</keyword>
<keyword id="KW-0547">Nucleotide-binding</keyword>
<keyword id="KW-0597">Phosphoprotein</keyword>
<keyword id="KW-1185">Reference proteome</keyword>
<keyword id="KW-1278">Translocase</keyword>
<keyword id="KW-0812">Transmembrane</keyword>
<keyword id="KW-1133">Transmembrane helix</keyword>
<keyword id="KW-0813">Transport</keyword>
<dbReference type="EC" id="7.2.2.9"/>
<dbReference type="EMBL" id="AE000511">
    <property type="protein sequence ID" value="AAD08117.1"/>
    <property type="molecule type" value="Genomic_DNA"/>
</dbReference>
<dbReference type="PIR" id="H64653">
    <property type="entry name" value="H64653"/>
</dbReference>
<dbReference type="RefSeq" id="NP_207863.1">
    <property type="nucleotide sequence ID" value="NC_000915.1"/>
</dbReference>
<dbReference type="RefSeq" id="WP_000664941.1">
    <property type="nucleotide sequence ID" value="NC_018939.1"/>
</dbReference>
<dbReference type="SMR" id="P55989"/>
<dbReference type="DIP" id="DIP-3096N"/>
<dbReference type="FunCoup" id="P55989">
    <property type="interactions" value="211"/>
</dbReference>
<dbReference type="IntAct" id="P55989">
    <property type="interactions" value="14"/>
</dbReference>
<dbReference type="MINT" id="P55989"/>
<dbReference type="STRING" id="85962.HP_1072"/>
<dbReference type="PaxDb" id="85962-C694_05540"/>
<dbReference type="EnsemblBacteria" id="AAD08117">
    <property type="protein sequence ID" value="AAD08117"/>
    <property type="gene ID" value="HP_1072"/>
</dbReference>
<dbReference type="KEGG" id="heo:C694_05540"/>
<dbReference type="KEGG" id="hpy:HP_1072"/>
<dbReference type="PATRIC" id="fig|85962.47.peg.1151"/>
<dbReference type="eggNOG" id="COG2217">
    <property type="taxonomic scope" value="Bacteria"/>
</dbReference>
<dbReference type="InParanoid" id="P55989"/>
<dbReference type="OrthoDB" id="2490525at2"/>
<dbReference type="PhylomeDB" id="P55989"/>
<dbReference type="Proteomes" id="UP000000429">
    <property type="component" value="Chromosome"/>
</dbReference>
<dbReference type="GO" id="GO:0016020">
    <property type="term" value="C:membrane"/>
    <property type="evidence" value="ECO:0000318"/>
    <property type="project" value="GO_Central"/>
</dbReference>
<dbReference type="GO" id="GO:0005886">
    <property type="term" value="C:plasma membrane"/>
    <property type="evidence" value="ECO:0007669"/>
    <property type="project" value="UniProtKB-SubCell"/>
</dbReference>
<dbReference type="GO" id="GO:0005524">
    <property type="term" value="F:ATP binding"/>
    <property type="evidence" value="ECO:0007669"/>
    <property type="project" value="UniProtKB-KW"/>
</dbReference>
<dbReference type="GO" id="GO:0016887">
    <property type="term" value="F:ATP hydrolysis activity"/>
    <property type="evidence" value="ECO:0007669"/>
    <property type="project" value="InterPro"/>
</dbReference>
<dbReference type="GO" id="GO:0005507">
    <property type="term" value="F:copper ion binding"/>
    <property type="evidence" value="ECO:0000318"/>
    <property type="project" value="GO_Central"/>
</dbReference>
<dbReference type="GO" id="GO:0043682">
    <property type="term" value="F:P-type divalent copper transporter activity"/>
    <property type="evidence" value="ECO:0000318"/>
    <property type="project" value="GO_Central"/>
</dbReference>
<dbReference type="GO" id="GO:0055070">
    <property type="term" value="P:copper ion homeostasis"/>
    <property type="evidence" value="ECO:0000318"/>
    <property type="project" value="GO_Central"/>
</dbReference>
<dbReference type="CDD" id="cd00371">
    <property type="entry name" value="HMA"/>
    <property type="match status" value="1"/>
</dbReference>
<dbReference type="CDD" id="cd02094">
    <property type="entry name" value="P-type_ATPase_Cu-like"/>
    <property type="match status" value="1"/>
</dbReference>
<dbReference type="FunFam" id="3.30.70.100:FF:000001">
    <property type="entry name" value="ATPase copper transporting beta"/>
    <property type="match status" value="1"/>
</dbReference>
<dbReference type="FunFam" id="2.70.150.10:FF:000118">
    <property type="entry name" value="Copper-transporting ATPase"/>
    <property type="match status" value="1"/>
</dbReference>
<dbReference type="Gene3D" id="3.30.70.100">
    <property type="match status" value="1"/>
</dbReference>
<dbReference type="Gene3D" id="3.40.1110.10">
    <property type="entry name" value="Calcium-transporting ATPase, cytoplasmic domain N"/>
    <property type="match status" value="1"/>
</dbReference>
<dbReference type="Gene3D" id="2.70.150.10">
    <property type="entry name" value="Calcium-transporting ATPase, cytoplasmic transduction domain A"/>
    <property type="match status" value="1"/>
</dbReference>
<dbReference type="Gene3D" id="3.40.50.1000">
    <property type="entry name" value="HAD superfamily/HAD-like"/>
    <property type="match status" value="1"/>
</dbReference>
<dbReference type="InterPro" id="IPR023299">
    <property type="entry name" value="ATPase_P-typ_cyto_dom_N"/>
</dbReference>
<dbReference type="InterPro" id="IPR018303">
    <property type="entry name" value="ATPase_P-typ_P_site"/>
</dbReference>
<dbReference type="InterPro" id="IPR023298">
    <property type="entry name" value="ATPase_P-typ_TM_dom_sf"/>
</dbReference>
<dbReference type="InterPro" id="IPR008250">
    <property type="entry name" value="ATPase_P-typ_transduc_dom_A_sf"/>
</dbReference>
<dbReference type="InterPro" id="IPR036412">
    <property type="entry name" value="HAD-like_sf"/>
</dbReference>
<dbReference type="InterPro" id="IPR023214">
    <property type="entry name" value="HAD_sf"/>
</dbReference>
<dbReference type="InterPro" id="IPR017969">
    <property type="entry name" value="Heavy-metal-associated_CS"/>
</dbReference>
<dbReference type="InterPro" id="IPR006121">
    <property type="entry name" value="HMA_dom"/>
</dbReference>
<dbReference type="InterPro" id="IPR036163">
    <property type="entry name" value="HMA_dom_sf"/>
</dbReference>
<dbReference type="InterPro" id="IPR027256">
    <property type="entry name" value="P-typ_ATPase_IB"/>
</dbReference>
<dbReference type="InterPro" id="IPR001757">
    <property type="entry name" value="P_typ_ATPase"/>
</dbReference>
<dbReference type="InterPro" id="IPR044492">
    <property type="entry name" value="P_typ_ATPase_HD_dom"/>
</dbReference>
<dbReference type="NCBIfam" id="TIGR01511">
    <property type="entry name" value="ATPase-IB1_Cu"/>
    <property type="match status" value="1"/>
</dbReference>
<dbReference type="NCBIfam" id="TIGR01525">
    <property type="entry name" value="ATPase-IB_hvy"/>
    <property type="match status" value="1"/>
</dbReference>
<dbReference type="NCBIfam" id="TIGR01494">
    <property type="entry name" value="ATPase_P-type"/>
    <property type="match status" value="1"/>
</dbReference>
<dbReference type="PANTHER" id="PTHR43520">
    <property type="entry name" value="ATP7, ISOFORM B"/>
    <property type="match status" value="1"/>
</dbReference>
<dbReference type="PANTHER" id="PTHR43520:SF8">
    <property type="entry name" value="P-TYPE CU(+) TRANSPORTER"/>
    <property type="match status" value="1"/>
</dbReference>
<dbReference type="Pfam" id="PF00122">
    <property type="entry name" value="E1-E2_ATPase"/>
    <property type="match status" value="1"/>
</dbReference>
<dbReference type="Pfam" id="PF00403">
    <property type="entry name" value="HMA"/>
    <property type="match status" value="1"/>
</dbReference>
<dbReference type="Pfam" id="PF00702">
    <property type="entry name" value="Hydrolase"/>
    <property type="match status" value="1"/>
</dbReference>
<dbReference type="PRINTS" id="PR00119">
    <property type="entry name" value="CATATPASE"/>
</dbReference>
<dbReference type="PRINTS" id="PR00943">
    <property type="entry name" value="CUATPASE"/>
</dbReference>
<dbReference type="SFLD" id="SFLDG00002">
    <property type="entry name" value="C1.7:_P-type_atpase_like"/>
    <property type="match status" value="1"/>
</dbReference>
<dbReference type="SFLD" id="SFLDF00027">
    <property type="entry name" value="p-type_atpase"/>
    <property type="match status" value="1"/>
</dbReference>
<dbReference type="SUPFAM" id="SSF81653">
    <property type="entry name" value="Calcium ATPase, transduction domain A"/>
    <property type="match status" value="1"/>
</dbReference>
<dbReference type="SUPFAM" id="SSF81665">
    <property type="entry name" value="Calcium ATPase, transmembrane domain M"/>
    <property type="match status" value="1"/>
</dbReference>
<dbReference type="SUPFAM" id="SSF56784">
    <property type="entry name" value="HAD-like"/>
    <property type="match status" value="1"/>
</dbReference>
<dbReference type="SUPFAM" id="SSF55008">
    <property type="entry name" value="HMA, heavy metal-associated domain"/>
    <property type="match status" value="1"/>
</dbReference>
<dbReference type="SUPFAM" id="SSF81660">
    <property type="entry name" value="Metal cation-transporting ATPase, ATP-binding domain N"/>
    <property type="match status" value="1"/>
</dbReference>
<dbReference type="PROSITE" id="PS00154">
    <property type="entry name" value="ATPASE_E1_E2"/>
    <property type="match status" value="1"/>
</dbReference>
<dbReference type="PROSITE" id="PS01047">
    <property type="entry name" value="HMA_1"/>
    <property type="match status" value="1"/>
</dbReference>
<dbReference type="PROSITE" id="PS50846">
    <property type="entry name" value="HMA_2"/>
    <property type="match status" value="1"/>
</dbReference>